<keyword id="KW-0520">NAD</keyword>
<keyword id="KW-0560">Oxidoreductase</keyword>
<proteinExistence type="evidence at transcript level"/>
<gene>
    <name type="primary">GPDH</name>
</gene>
<accession>P52425</accession>
<protein>
    <recommendedName>
        <fullName>Glycerol-3-phosphate dehydrogenase [NAD(+)]</fullName>
        <ecNumber>1.1.1.8</ecNumber>
    </recommendedName>
</protein>
<reference key="1">
    <citation type="book" date="1995" name="Plant lipid metabolism">
        <title>Cloning of a cDNA coding for a glycerol-3-phosphate dehydrogenase from Cuphea lanceolata.</title>
        <editorList>
            <person name="Kader J.-C."/>
            <person name="Mazliak P."/>
        </editorList>
        <authorList>
            <person name="Hausmann L."/>
            <person name="Schell J."/>
            <person name="Toepfer R."/>
        </authorList>
    </citation>
    <scope>NUCLEOTIDE SEQUENCE [MRNA]</scope>
</reference>
<organism>
    <name type="scientific">Cuphea lanceolata</name>
    <name type="common">Cigar flower</name>
    <dbReference type="NCBI Taxonomy" id="3930"/>
    <lineage>
        <taxon>Eukaryota</taxon>
        <taxon>Viridiplantae</taxon>
        <taxon>Streptophyta</taxon>
        <taxon>Embryophyta</taxon>
        <taxon>Tracheophyta</taxon>
        <taxon>Spermatophyta</taxon>
        <taxon>Magnoliopsida</taxon>
        <taxon>eudicotyledons</taxon>
        <taxon>Gunneridae</taxon>
        <taxon>Pentapetalae</taxon>
        <taxon>rosids</taxon>
        <taxon>malvids</taxon>
        <taxon>Myrtales</taxon>
        <taxon>Lythraceae</taxon>
        <taxon>Cuphea</taxon>
    </lineage>
</organism>
<evidence type="ECO:0000250" key="1"/>
<evidence type="ECO:0000256" key="2">
    <source>
        <dbReference type="SAM" id="MobiDB-lite"/>
    </source>
</evidence>
<evidence type="ECO:0000305" key="3"/>
<name>GPDA_CUPLA</name>
<dbReference type="EC" id="1.1.1.8"/>
<dbReference type="EMBL" id="X79677">
    <property type="protein sequence ID" value="CAA56125.1"/>
    <property type="molecule type" value="mRNA"/>
</dbReference>
<dbReference type="SMR" id="P52425"/>
<dbReference type="GO" id="GO:0005829">
    <property type="term" value="C:cytosol"/>
    <property type="evidence" value="ECO:0007669"/>
    <property type="project" value="TreeGrafter"/>
</dbReference>
<dbReference type="GO" id="GO:0141152">
    <property type="term" value="F:glycerol-3-phosphate dehydrogenase (NAD+) activity"/>
    <property type="evidence" value="ECO:0007669"/>
    <property type="project" value="UniProtKB-EC"/>
</dbReference>
<dbReference type="GO" id="GO:0051287">
    <property type="term" value="F:NAD binding"/>
    <property type="evidence" value="ECO:0007669"/>
    <property type="project" value="InterPro"/>
</dbReference>
<dbReference type="GO" id="GO:0042803">
    <property type="term" value="F:protein homodimerization activity"/>
    <property type="evidence" value="ECO:0007669"/>
    <property type="project" value="InterPro"/>
</dbReference>
<dbReference type="GO" id="GO:0005975">
    <property type="term" value="P:carbohydrate metabolic process"/>
    <property type="evidence" value="ECO:0007669"/>
    <property type="project" value="InterPro"/>
</dbReference>
<dbReference type="GO" id="GO:0046168">
    <property type="term" value="P:glycerol-3-phosphate catabolic process"/>
    <property type="evidence" value="ECO:0007669"/>
    <property type="project" value="InterPro"/>
</dbReference>
<dbReference type="FunFam" id="1.10.1040.10:FF:000004">
    <property type="entry name" value="Glycerol-3-phosphate dehydrogenase [NAD(+)]"/>
    <property type="match status" value="1"/>
</dbReference>
<dbReference type="FunFam" id="3.40.50.720:FF:000276">
    <property type="entry name" value="Glycerol-3-phosphate dehydrogenase [NAD(+)]"/>
    <property type="match status" value="1"/>
</dbReference>
<dbReference type="Gene3D" id="1.10.1040.10">
    <property type="entry name" value="N-(1-d-carboxylethyl)-l-norvaline Dehydrogenase, domain 2"/>
    <property type="match status" value="1"/>
</dbReference>
<dbReference type="Gene3D" id="3.40.50.720">
    <property type="entry name" value="NAD(P)-binding Rossmann-like Domain"/>
    <property type="match status" value="1"/>
</dbReference>
<dbReference type="InterPro" id="IPR008927">
    <property type="entry name" value="6-PGluconate_DH-like_C_sf"/>
</dbReference>
<dbReference type="InterPro" id="IPR013328">
    <property type="entry name" value="6PGD_dom2"/>
</dbReference>
<dbReference type="InterPro" id="IPR006168">
    <property type="entry name" value="G3P_DH_NAD-dep"/>
</dbReference>
<dbReference type="InterPro" id="IPR006109">
    <property type="entry name" value="G3P_DH_NAD-dep_C"/>
</dbReference>
<dbReference type="InterPro" id="IPR017751">
    <property type="entry name" value="G3P_DH_NAD-dep_euk"/>
</dbReference>
<dbReference type="InterPro" id="IPR011128">
    <property type="entry name" value="G3P_DH_NAD-dep_N"/>
</dbReference>
<dbReference type="InterPro" id="IPR036291">
    <property type="entry name" value="NAD(P)-bd_dom_sf"/>
</dbReference>
<dbReference type="NCBIfam" id="TIGR03376">
    <property type="entry name" value="glycerol3P_DH"/>
    <property type="match status" value="1"/>
</dbReference>
<dbReference type="PANTHER" id="PTHR11728">
    <property type="entry name" value="GLYCEROL-3-PHOSPHATE DEHYDROGENASE"/>
    <property type="match status" value="1"/>
</dbReference>
<dbReference type="PANTHER" id="PTHR11728:SF8">
    <property type="entry name" value="GLYCEROL-3-PHOSPHATE DEHYDROGENASE [NAD(+)]-RELATED"/>
    <property type="match status" value="1"/>
</dbReference>
<dbReference type="Pfam" id="PF07479">
    <property type="entry name" value="NAD_Gly3P_dh_C"/>
    <property type="match status" value="1"/>
</dbReference>
<dbReference type="Pfam" id="PF01210">
    <property type="entry name" value="NAD_Gly3P_dh_N"/>
    <property type="match status" value="1"/>
</dbReference>
<dbReference type="PIRSF" id="PIRSF000114">
    <property type="entry name" value="Glycerol-3-P_dh"/>
    <property type="match status" value="1"/>
</dbReference>
<dbReference type="PRINTS" id="PR00077">
    <property type="entry name" value="GPDHDRGNASE"/>
</dbReference>
<dbReference type="SUPFAM" id="SSF48179">
    <property type="entry name" value="6-phosphogluconate dehydrogenase C-terminal domain-like"/>
    <property type="match status" value="1"/>
</dbReference>
<dbReference type="SUPFAM" id="SSF51735">
    <property type="entry name" value="NAD(P)-binding Rossmann-fold domains"/>
    <property type="match status" value="1"/>
</dbReference>
<dbReference type="PROSITE" id="PS00957">
    <property type="entry name" value="NAD_G3PDH"/>
    <property type="match status" value="1"/>
</dbReference>
<comment type="catalytic activity">
    <reaction>
        <text>sn-glycerol 3-phosphate + NAD(+) = dihydroxyacetone phosphate + NADH + H(+)</text>
        <dbReference type="Rhea" id="RHEA:11092"/>
        <dbReference type="ChEBI" id="CHEBI:15378"/>
        <dbReference type="ChEBI" id="CHEBI:57540"/>
        <dbReference type="ChEBI" id="CHEBI:57597"/>
        <dbReference type="ChEBI" id="CHEBI:57642"/>
        <dbReference type="ChEBI" id="CHEBI:57945"/>
        <dbReference type="EC" id="1.1.1.8"/>
    </reaction>
</comment>
<comment type="similarity">
    <text evidence="3">Belongs to the NAD-dependent glycerol-3-phosphate dehydrogenase family.</text>
</comment>
<sequence length="372" mass="40811">MAPSELNCTHQNQHSSGYDGPRSRVTVVGSGNWGSVAAKLIATNTLKLPSFHDEVRMWVFEETLPSGEKLTDVINQTNENVKYLPGIKLGRNVVADPDLENAVKDANMLVFVTPHQFMEGICKRLEGKIQEGAQALSLIKGMEVKMEGPCMISSLISDLLGINCCVLMGANIANEIAVEKFSEATVGFRENRDIAEKWVQLFSTPYFMVSAVEDVEGVELCGTLKNIVAIAAGFVDGLEMGNNTKAAIMRIGLREMKAFSKLLFPSVKDTTFFESCGVADLITTCLGGRNRKVAEAFAKNGGKRSFDDLEAEMLRGQKLQGVSTAKEVYEVLGHRGWLELFPLFSTVHEISTGRLPPSAIVEYSEQKTIFSW</sequence>
<feature type="chain" id="PRO_0000138071" description="Glycerol-3-phosphate dehydrogenase [NAD(+)]">
    <location>
        <begin position="1"/>
        <end position="372"/>
    </location>
</feature>
<feature type="region of interest" description="Disordered" evidence="2">
    <location>
        <begin position="1"/>
        <end position="23"/>
    </location>
</feature>
<feature type="compositionally biased region" description="Polar residues" evidence="2">
    <location>
        <begin position="1"/>
        <end position="16"/>
    </location>
</feature>
<feature type="active site" description="Proton acceptor" evidence="1">
    <location>
        <position position="225"/>
    </location>
</feature>
<feature type="binding site" evidence="1">
    <location>
        <begin position="29"/>
        <end position="34"/>
    </location>
    <ligand>
        <name>NAD(+)</name>
        <dbReference type="ChEBI" id="CHEBI:57540"/>
    </ligand>
</feature>
<feature type="binding site" evidence="1">
    <location>
        <position position="60"/>
    </location>
    <ligand>
        <name>NAD(+)</name>
        <dbReference type="ChEBI" id="CHEBI:57540"/>
    </ligand>
</feature>
<feature type="binding site" evidence="1">
    <location>
        <position position="117"/>
    </location>
    <ligand>
        <name>NAD(+)</name>
        <dbReference type="ChEBI" id="CHEBI:57540"/>
    </ligand>
</feature>
<feature type="binding site" evidence="1">
    <location>
        <position position="140"/>
    </location>
    <ligand>
        <name>NAD(+)</name>
        <dbReference type="ChEBI" id="CHEBI:57540"/>
    </ligand>
</feature>
<feature type="binding site" evidence="1">
    <location>
        <position position="140"/>
    </location>
    <ligand>
        <name>substrate</name>
    </ligand>
</feature>
<feature type="binding site" evidence="1">
    <location>
        <position position="173"/>
    </location>
    <ligand>
        <name>NAD(+)</name>
        <dbReference type="ChEBI" id="CHEBI:57540"/>
    </ligand>
</feature>
<feature type="binding site" evidence="1">
    <location>
        <begin position="289"/>
        <end position="290"/>
    </location>
    <ligand>
        <name>substrate</name>
    </ligand>
</feature>
<feature type="binding site" evidence="1">
    <location>
        <position position="289"/>
    </location>
    <ligand>
        <name>NAD(+)</name>
        <dbReference type="ChEBI" id="CHEBI:57540"/>
    </ligand>
</feature>
<feature type="binding site" evidence="1">
    <location>
        <position position="318"/>
    </location>
    <ligand>
        <name>NAD(+)</name>
        <dbReference type="ChEBI" id="CHEBI:57540"/>
    </ligand>
</feature>
<feature type="binding site" evidence="1">
    <location>
        <position position="320"/>
    </location>
    <ligand>
        <name>NAD(+)</name>
        <dbReference type="ChEBI" id="CHEBI:57540"/>
    </ligand>
</feature>